<sequence length="420" mass="45319">MQNLLEALVSRSLVHDQTPGLQARLAQGPITGYVGFDPTADSLHVGHLLAVMSLAWLQRCGGTPIIVVGGGTGMVGDPSGKRSERPVLSVEEIDRNVAAIRAQLERFVSFEGQNAARVRNNADWLRAIGLMEFLRDVGKHFTVNYMLAKDSVKGRMESGISFTEFSYQLIQAYDFWHLFRSEKCELQMGGSDQWGNITAGAELVSRKDGASVHGLTFPLLTTASGTKFGKTEGGAVWLDPARTSPYKFFQFWLNTDDRDVERLLKFFTFLSVEEIAALLAEQARDPGKRPAQRRLAEDVTARVHGPDVTRSVVEASRILFGGTDLRAASADVLEVLAGEIPSATVTGDELAALTVADLLVKVGLAASKGEVRRGVAGRGFSLNGAVLESGDAKVAAGDLLAGGYALLQKGKRNYALVKVR</sequence>
<gene>
    <name evidence="1" type="primary">tyrS</name>
    <name type="ordered locus">A2cp1_1171</name>
</gene>
<dbReference type="EC" id="6.1.1.1" evidence="1"/>
<dbReference type="EMBL" id="CP001359">
    <property type="protein sequence ID" value="ACL64516.1"/>
    <property type="molecule type" value="Genomic_DNA"/>
</dbReference>
<dbReference type="RefSeq" id="WP_012632506.1">
    <property type="nucleotide sequence ID" value="NC_011891.1"/>
</dbReference>
<dbReference type="SMR" id="B8JFS8"/>
<dbReference type="KEGG" id="acp:A2cp1_1171"/>
<dbReference type="HOGENOM" id="CLU_024003_0_3_7"/>
<dbReference type="Proteomes" id="UP000007089">
    <property type="component" value="Chromosome"/>
</dbReference>
<dbReference type="GO" id="GO:0005829">
    <property type="term" value="C:cytosol"/>
    <property type="evidence" value="ECO:0007669"/>
    <property type="project" value="TreeGrafter"/>
</dbReference>
<dbReference type="GO" id="GO:0005524">
    <property type="term" value="F:ATP binding"/>
    <property type="evidence" value="ECO:0007669"/>
    <property type="project" value="UniProtKB-UniRule"/>
</dbReference>
<dbReference type="GO" id="GO:0003723">
    <property type="term" value="F:RNA binding"/>
    <property type="evidence" value="ECO:0007669"/>
    <property type="project" value="UniProtKB-KW"/>
</dbReference>
<dbReference type="GO" id="GO:0004831">
    <property type="term" value="F:tyrosine-tRNA ligase activity"/>
    <property type="evidence" value="ECO:0007669"/>
    <property type="project" value="UniProtKB-UniRule"/>
</dbReference>
<dbReference type="GO" id="GO:0006437">
    <property type="term" value="P:tyrosyl-tRNA aminoacylation"/>
    <property type="evidence" value="ECO:0007669"/>
    <property type="project" value="UniProtKB-UniRule"/>
</dbReference>
<dbReference type="CDD" id="cd00805">
    <property type="entry name" value="TyrRS_core"/>
    <property type="match status" value="1"/>
</dbReference>
<dbReference type="FunFam" id="1.10.240.10:FF:000001">
    <property type="entry name" value="Tyrosine--tRNA ligase"/>
    <property type="match status" value="1"/>
</dbReference>
<dbReference type="Gene3D" id="3.40.50.620">
    <property type="entry name" value="HUPs"/>
    <property type="match status" value="1"/>
</dbReference>
<dbReference type="Gene3D" id="3.10.290.10">
    <property type="entry name" value="RNA-binding S4 domain"/>
    <property type="match status" value="1"/>
</dbReference>
<dbReference type="Gene3D" id="1.10.240.10">
    <property type="entry name" value="Tyrosyl-Transfer RNA Synthetase"/>
    <property type="match status" value="1"/>
</dbReference>
<dbReference type="HAMAP" id="MF_02006">
    <property type="entry name" value="Tyr_tRNA_synth_type1"/>
    <property type="match status" value="1"/>
</dbReference>
<dbReference type="InterPro" id="IPR001412">
    <property type="entry name" value="aa-tRNA-synth_I_CS"/>
</dbReference>
<dbReference type="InterPro" id="IPR002305">
    <property type="entry name" value="aa-tRNA-synth_Ic"/>
</dbReference>
<dbReference type="InterPro" id="IPR014729">
    <property type="entry name" value="Rossmann-like_a/b/a_fold"/>
</dbReference>
<dbReference type="InterPro" id="IPR036986">
    <property type="entry name" value="S4_RNA-bd_sf"/>
</dbReference>
<dbReference type="InterPro" id="IPR054608">
    <property type="entry name" value="SYY-like_C"/>
</dbReference>
<dbReference type="InterPro" id="IPR002307">
    <property type="entry name" value="Tyr-tRNA-ligase"/>
</dbReference>
<dbReference type="InterPro" id="IPR024088">
    <property type="entry name" value="Tyr-tRNA-ligase_bac-type"/>
</dbReference>
<dbReference type="InterPro" id="IPR024107">
    <property type="entry name" value="Tyr-tRNA-ligase_bac_1"/>
</dbReference>
<dbReference type="NCBIfam" id="TIGR00234">
    <property type="entry name" value="tyrS"/>
    <property type="match status" value="1"/>
</dbReference>
<dbReference type="PANTHER" id="PTHR11766:SF0">
    <property type="entry name" value="TYROSINE--TRNA LIGASE, MITOCHONDRIAL"/>
    <property type="match status" value="1"/>
</dbReference>
<dbReference type="PANTHER" id="PTHR11766">
    <property type="entry name" value="TYROSYL-TRNA SYNTHETASE"/>
    <property type="match status" value="1"/>
</dbReference>
<dbReference type="Pfam" id="PF22421">
    <property type="entry name" value="SYY_C-terminal"/>
    <property type="match status" value="1"/>
</dbReference>
<dbReference type="Pfam" id="PF00579">
    <property type="entry name" value="tRNA-synt_1b"/>
    <property type="match status" value="1"/>
</dbReference>
<dbReference type="PRINTS" id="PR01040">
    <property type="entry name" value="TRNASYNTHTYR"/>
</dbReference>
<dbReference type="SUPFAM" id="SSF55174">
    <property type="entry name" value="Alpha-L RNA-binding motif"/>
    <property type="match status" value="1"/>
</dbReference>
<dbReference type="SUPFAM" id="SSF52374">
    <property type="entry name" value="Nucleotidylyl transferase"/>
    <property type="match status" value="1"/>
</dbReference>
<dbReference type="PROSITE" id="PS00178">
    <property type="entry name" value="AA_TRNA_LIGASE_I"/>
    <property type="match status" value="1"/>
</dbReference>
<dbReference type="PROSITE" id="PS50889">
    <property type="entry name" value="S4"/>
    <property type="match status" value="1"/>
</dbReference>
<name>SYY_ANAD2</name>
<evidence type="ECO:0000255" key="1">
    <source>
        <dbReference type="HAMAP-Rule" id="MF_02006"/>
    </source>
</evidence>
<accession>B8JFS8</accession>
<proteinExistence type="inferred from homology"/>
<keyword id="KW-0030">Aminoacyl-tRNA synthetase</keyword>
<keyword id="KW-0067">ATP-binding</keyword>
<keyword id="KW-0963">Cytoplasm</keyword>
<keyword id="KW-0436">Ligase</keyword>
<keyword id="KW-0547">Nucleotide-binding</keyword>
<keyword id="KW-0648">Protein biosynthesis</keyword>
<keyword id="KW-0694">RNA-binding</keyword>
<organism>
    <name type="scientific">Anaeromyxobacter dehalogenans (strain 2CP-1 / ATCC BAA-258)</name>
    <dbReference type="NCBI Taxonomy" id="455488"/>
    <lineage>
        <taxon>Bacteria</taxon>
        <taxon>Pseudomonadati</taxon>
        <taxon>Myxococcota</taxon>
        <taxon>Myxococcia</taxon>
        <taxon>Myxococcales</taxon>
        <taxon>Cystobacterineae</taxon>
        <taxon>Anaeromyxobacteraceae</taxon>
        <taxon>Anaeromyxobacter</taxon>
    </lineage>
</organism>
<comment type="function">
    <text evidence="1">Catalyzes the attachment of tyrosine to tRNA(Tyr) in a two-step reaction: tyrosine is first activated by ATP to form Tyr-AMP and then transferred to the acceptor end of tRNA(Tyr).</text>
</comment>
<comment type="catalytic activity">
    <reaction evidence="1">
        <text>tRNA(Tyr) + L-tyrosine + ATP = L-tyrosyl-tRNA(Tyr) + AMP + diphosphate + H(+)</text>
        <dbReference type="Rhea" id="RHEA:10220"/>
        <dbReference type="Rhea" id="RHEA-COMP:9706"/>
        <dbReference type="Rhea" id="RHEA-COMP:9707"/>
        <dbReference type="ChEBI" id="CHEBI:15378"/>
        <dbReference type="ChEBI" id="CHEBI:30616"/>
        <dbReference type="ChEBI" id="CHEBI:33019"/>
        <dbReference type="ChEBI" id="CHEBI:58315"/>
        <dbReference type="ChEBI" id="CHEBI:78442"/>
        <dbReference type="ChEBI" id="CHEBI:78536"/>
        <dbReference type="ChEBI" id="CHEBI:456215"/>
        <dbReference type="EC" id="6.1.1.1"/>
    </reaction>
</comment>
<comment type="subunit">
    <text evidence="1">Homodimer.</text>
</comment>
<comment type="subcellular location">
    <subcellularLocation>
        <location evidence="1">Cytoplasm</location>
    </subcellularLocation>
</comment>
<comment type="similarity">
    <text evidence="1">Belongs to the class-I aminoacyl-tRNA synthetase family. TyrS type 1 subfamily.</text>
</comment>
<protein>
    <recommendedName>
        <fullName evidence="1">Tyrosine--tRNA ligase</fullName>
        <ecNumber evidence="1">6.1.1.1</ecNumber>
    </recommendedName>
    <alternativeName>
        <fullName evidence="1">Tyrosyl-tRNA synthetase</fullName>
        <shortName evidence="1">TyrRS</shortName>
    </alternativeName>
</protein>
<reference key="1">
    <citation type="submission" date="2009-01" db="EMBL/GenBank/DDBJ databases">
        <title>Complete sequence of Anaeromyxobacter dehalogenans 2CP-1.</title>
        <authorList>
            <person name="Lucas S."/>
            <person name="Copeland A."/>
            <person name="Lapidus A."/>
            <person name="Glavina del Rio T."/>
            <person name="Dalin E."/>
            <person name="Tice H."/>
            <person name="Bruce D."/>
            <person name="Goodwin L."/>
            <person name="Pitluck S."/>
            <person name="Saunders E."/>
            <person name="Brettin T."/>
            <person name="Detter J.C."/>
            <person name="Han C."/>
            <person name="Larimer F."/>
            <person name="Land M."/>
            <person name="Hauser L."/>
            <person name="Kyrpides N."/>
            <person name="Ovchinnikova G."/>
            <person name="Beliaev A.S."/>
            <person name="Richardson P."/>
        </authorList>
    </citation>
    <scope>NUCLEOTIDE SEQUENCE [LARGE SCALE GENOMIC DNA]</scope>
    <source>
        <strain>2CP-1 / ATCC BAA-258</strain>
    </source>
</reference>
<feature type="chain" id="PRO_1000189255" description="Tyrosine--tRNA ligase">
    <location>
        <begin position="1"/>
        <end position="420"/>
    </location>
</feature>
<feature type="domain" description="S4 RNA-binding" evidence="1">
    <location>
        <begin position="353"/>
        <end position="419"/>
    </location>
</feature>
<feature type="short sequence motif" description="'HIGH' region">
    <location>
        <begin position="38"/>
        <end position="47"/>
    </location>
</feature>
<feature type="short sequence motif" description="'KMSKS' region">
    <location>
        <begin position="227"/>
        <end position="231"/>
    </location>
</feature>
<feature type="binding site" evidence="1">
    <location>
        <position position="33"/>
    </location>
    <ligand>
        <name>L-tyrosine</name>
        <dbReference type="ChEBI" id="CHEBI:58315"/>
    </ligand>
</feature>
<feature type="binding site" evidence="1">
    <location>
        <position position="167"/>
    </location>
    <ligand>
        <name>L-tyrosine</name>
        <dbReference type="ChEBI" id="CHEBI:58315"/>
    </ligand>
</feature>
<feature type="binding site" evidence="1">
    <location>
        <position position="171"/>
    </location>
    <ligand>
        <name>L-tyrosine</name>
        <dbReference type="ChEBI" id="CHEBI:58315"/>
    </ligand>
</feature>
<feature type="binding site" evidence="1">
    <location>
        <position position="230"/>
    </location>
    <ligand>
        <name>ATP</name>
        <dbReference type="ChEBI" id="CHEBI:30616"/>
    </ligand>
</feature>